<keyword id="KW-0012">Acyltransferase</keyword>
<keyword id="KW-0045">Antibiotic biosynthesis</keyword>
<keyword id="KW-0808">Transferase</keyword>
<proteinExistence type="evidence at protein level"/>
<accession>P16539</accession>
<feature type="chain" id="PRO_0000180345" description="Tetracenomycin polyketide synthase ketoacyl synthase beta subunit">
    <location>
        <begin position="1"/>
        <end position="409"/>
    </location>
</feature>
<feature type="domain" description="Ketosynthase family 3 (KS3)" evidence="1">
    <location>
        <begin position="4"/>
        <end position="407"/>
    </location>
</feature>
<feature type="sequence conflict" description="In Ref. 1; CAB38455." evidence="6" ref="1">
    <original>TGAPAP</original>
    <variation>HRCARA</variation>
    <location>
        <begin position="365"/>
        <end position="370"/>
    </location>
</feature>
<sequence length="409" mass="42298">MSAPAPVVVTGLGIVAPNGTGTEEYWAATLAGKSGIDVIQRFDPHGYPVRVGGEVLAFDAAAHLPGRLLPQTDRMTQHALVAAEWALADAGLEPEKQDEYGLGVLTAAGAGGFEFGQREMQKLWGTGPERVSAYQSFAWFYAVNTGQISIRHGMRGHSSVFVTEQAGGLDAAAHAARLLRKGTLNTALTGGCEASLCPWGLVAQIPSGFLSEATDPHDAYLPFDARAAGYVPGEGGAMLVAERADSARERDAATVYGRIAGHASTFDARPGTGRPTGPARAIRLALEEARVAPEDVDVVYADAAGVPALDRAEAEALAEVFGPGAVPVTAPKTMTGRLYAGGAALDVATALLSIRDCVVPPTVGTGAPAPGLGIDLVLHQPRELRVDTALVVARGMGGFNSALVVRRHG</sequence>
<reference key="1">
    <citation type="journal article" date="1989" name="EMBO J.">
        <title>Analysis of the nucleotide sequence of the Streptomyces glaucescens tcmI genes provides key information about the enzymology of polyketide antibiotic biosynthesis.</title>
        <authorList>
            <person name="Bibb M.J."/>
            <person name="Biro S."/>
            <person name="Motamedi H."/>
            <person name="Collins J.F."/>
            <person name="Hutchinson C.R."/>
        </authorList>
    </citation>
    <scope>NUCLEOTIDE SEQUENCE [GENOMIC DNA]</scope>
    <source>
        <strain>DSM 40716 / ETH 22794 / Tue 49</strain>
    </source>
</reference>
<reference key="2">
    <citation type="journal article" date="1993" name="J. Bacteriol.">
        <title>The tcmVI region of the tetracenomycin C biosynthetic gene cluster of Streptomyces glaucescens encodes the tetracenomycin F1 monooxygenase, tetracenomycin F2 cyclase, and, most likely, a second cyclase.</title>
        <authorList>
            <person name="Summers R.G."/>
            <person name="Wendt-Pienkowski E."/>
            <person name="Motamedi H."/>
            <person name="Hutchinson C.R."/>
        </authorList>
    </citation>
    <scope>NUCLEOTIDE SEQUENCE [GENOMIC DNA]</scope>
    <source>
        <strain>DSM 40716 / ETH 22794 / Tue 49</strain>
    </source>
</reference>
<reference key="3">
    <citation type="journal article" date="1993" name="Science">
        <title>Enzymatic synthesis of a bacterial polyketide from acetyl and malonyl coenzyme A.</title>
        <authorList>
            <person name="Shen B."/>
            <person name="Hutchinson C.R."/>
        </authorList>
    </citation>
    <scope>FUNCTION</scope>
    <scope>SUBUNIT</scope>
    <source>
        <strain>DSM 40716 / ETH 22794 / Tue 49</strain>
    </source>
</reference>
<reference key="4">
    <citation type="journal article" date="1996" name="Proc. Natl. Acad. Sci. U.S.A.">
        <title>Deciphering the mechanism for the assembly of aromatic polyketides by a bacterial polyketide synthase.</title>
        <authorList>
            <person name="Shen B."/>
            <person name="Hutchinson C.R."/>
        </authorList>
    </citation>
    <scope>SUBUNIT</scope>
    <source>
        <strain>DSM 40716 / ETH 22794 / Tue 49</strain>
    </source>
</reference>
<reference key="5">
    <citation type="journal article" date="1998" name="Biochemistry">
        <title>Reconstitution of the iterative type II polyketide synthase for tetracenomycin F2 biosynthesis.</title>
        <authorList>
            <person name="Bao W."/>
            <person name="Wendt-Pienkowski E."/>
            <person name="Hutchinson C.R."/>
        </authorList>
    </citation>
    <scope>FUNCTION</scope>
    <scope>CATALYTIC ACTIVITY</scope>
    <scope>PATHWAY</scope>
    <scope>SUBUNIT</scope>
    <source>
        <strain>DSM 40716 / ETH 22794 / Tue 49</strain>
    </source>
</reference>
<gene>
    <name evidence="5" type="primary">tcmL</name>
</gene>
<protein>
    <recommendedName>
        <fullName evidence="6">Tetracenomycin polyketide synthase ketoacyl synthase beta subunit</fullName>
        <ecNumber evidence="4">2.3.1.235</ecNumber>
    </recommendedName>
    <alternativeName>
        <fullName evidence="6">TCM PKS</fullName>
    </alternativeName>
</protein>
<evidence type="ECO:0000255" key="1">
    <source>
        <dbReference type="PROSITE-ProRule" id="PRU01348"/>
    </source>
</evidence>
<evidence type="ECO:0000269" key="2">
    <source>
    </source>
</evidence>
<evidence type="ECO:0000269" key="3">
    <source>
    </source>
</evidence>
<evidence type="ECO:0000269" key="4">
    <source>
    </source>
</evidence>
<evidence type="ECO:0000303" key="5">
    <source>
    </source>
</evidence>
<evidence type="ECO:0000305" key="6"/>
<name>TCML_STRGA</name>
<comment type="function">
    <text evidence="2 4">Involved in the biosynthesis of tetracenomycin C (TCM C) (PubMed:9609708). Part of a type II polyketide synthase (PKS) that catalyzes the synthesis of tetracenomycin F2 (TCM F2), a precursor of TCM C, from malonyl-CoA (PubMed:8248801, PubMed:9609708). TcmK and TcmL form a heterodimeric alpha-beta complex that catalyzes the condensation reactions between the growing acyl-enzyme chain and the malonyl-CoA extender units (PubMed:9609708).</text>
</comment>
<comment type="catalytic activity">
    <reaction evidence="4">
        <text>10 malonyl-CoA + 8 H(+) = tetracenomycin F2 + 10 CO2 + 10 CoA + 2 H2O</text>
        <dbReference type="Rhea" id="RHEA:21348"/>
        <dbReference type="ChEBI" id="CHEBI:15377"/>
        <dbReference type="ChEBI" id="CHEBI:15378"/>
        <dbReference type="ChEBI" id="CHEBI:16526"/>
        <dbReference type="ChEBI" id="CHEBI:57287"/>
        <dbReference type="ChEBI" id="CHEBI:57384"/>
        <dbReference type="ChEBI" id="CHEBI:77982"/>
        <dbReference type="EC" id="2.3.1.235"/>
    </reaction>
    <physiologicalReaction direction="left-to-right" evidence="4">
        <dbReference type="Rhea" id="RHEA:21349"/>
    </physiologicalReaction>
</comment>
<comment type="pathway">
    <text evidence="4">Antibiotic biosynthesis; tetracenomycin C biosynthesis.</text>
</comment>
<comment type="subunit">
    <text evidence="2 3 4">The tetracenomycin polyketide synthase (TCM PKS) is composed of a ketosynthase complex (TcmKL), an acyl carrier protein (TcmM), a cyclase (TcmN) and a probable second cyclase (TcmJ) (PubMed:8248801, PubMed:8692863). TcmK and TcmL form a heterodimeric complex (PubMed:9609708).</text>
</comment>
<comment type="miscellaneous">
    <text evidence="6">This putative ketoacyl synthase lacks the active site cysteine.</text>
</comment>
<comment type="similarity">
    <text evidence="6">Belongs to the thiolase-like superfamily. Beta-ketoacyl-ACP synthases family.</text>
</comment>
<dbReference type="EC" id="2.3.1.235" evidence="4"/>
<dbReference type="EMBL" id="X15312">
    <property type="protein sequence ID" value="CAB38455.1"/>
    <property type="molecule type" value="Genomic_DNA"/>
</dbReference>
<dbReference type="EMBL" id="M80674">
    <property type="protein sequence ID" value="AAA67516.1"/>
    <property type="molecule type" value="Genomic_DNA"/>
</dbReference>
<dbReference type="PIR" id="S05974">
    <property type="entry name" value="S05974"/>
</dbReference>
<dbReference type="PIR" id="S27694">
    <property type="entry name" value="S27694"/>
</dbReference>
<dbReference type="RefSeq" id="WP_043504917.1">
    <property type="nucleotide sequence ID" value="NZ_CP009438.1"/>
</dbReference>
<dbReference type="SMR" id="P16539"/>
<dbReference type="STRING" id="1907.SGLAU_26360"/>
<dbReference type="eggNOG" id="COG0304">
    <property type="taxonomic scope" value="Bacteria"/>
</dbReference>
<dbReference type="OrthoDB" id="416758at2"/>
<dbReference type="BioCyc" id="MetaCyc:MONOMER-18611"/>
<dbReference type="UniPathway" id="UPA00174"/>
<dbReference type="GO" id="GO:0004315">
    <property type="term" value="F:3-oxoacyl-[acyl-carrier-protein] synthase activity"/>
    <property type="evidence" value="ECO:0007669"/>
    <property type="project" value="TreeGrafter"/>
</dbReference>
<dbReference type="GO" id="GO:0017000">
    <property type="term" value="P:antibiotic biosynthetic process"/>
    <property type="evidence" value="ECO:0007669"/>
    <property type="project" value="UniProtKB-KW"/>
</dbReference>
<dbReference type="GO" id="GO:0006633">
    <property type="term" value="P:fatty acid biosynthetic process"/>
    <property type="evidence" value="ECO:0007669"/>
    <property type="project" value="TreeGrafter"/>
</dbReference>
<dbReference type="CDD" id="cd00832">
    <property type="entry name" value="CLF"/>
    <property type="match status" value="1"/>
</dbReference>
<dbReference type="Gene3D" id="3.40.47.10">
    <property type="match status" value="2"/>
</dbReference>
<dbReference type="InterPro" id="IPR000794">
    <property type="entry name" value="Beta-ketoacyl_synthase"/>
</dbReference>
<dbReference type="InterPro" id="IPR014031">
    <property type="entry name" value="Ketoacyl_synth_C"/>
</dbReference>
<dbReference type="InterPro" id="IPR014030">
    <property type="entry name" value="Ketoacyl_synth_N"/>
</dbReference>
<dbReference type="InterPro" id="IPR020841">
    <property type="entry name" value="PKS_Beta-ketoAc_synthase_dom"/>
</dbReference>
<dbReference type="InterPro" id="IPR016039">
    <property type="entry name" value="Thiolase-like"/>
</dbReference>
<dbReference type="PANTHER" id="PTHR11712:SF322">
    <property type="entry name" value="POLYKETIDE BETA-KETOACYL SYNTHASE 2-RELATED"/>
    <property type="match status" value="1"/>
</dbReference>
<dbReference type="PANTHER" id="PTHR11712">
    <property type="entry name" value="POLYKETIDE SYNTHASE-RELATED"/>
    <property type="match status" value="1"/>
</dbReference>
<dbReference type="Pfam" id="PF00109">
    <property type="entry name" value="ketoacyl-synt"/>
    <property type="match status" value="1"/>
</dbReference>
<dbReference type="Pfam" id="PF02801">
    <property type="entry name" value="Ketoacyl-synt_C"/>
    <property type="match status" value="1"/>
</dbReference>
<dbReference type="SMART" id="SM00825">
    <property type="entry name" value="PKS_KS"/>
    <property type="match status" value="1"/>
</dbReference>
<dbReference type="SUPFAM" id="SSF53901">
    <property type="entry name" value="Thiolase-like"/>
    <property type="match status" value="2"/>
</dbReference>
<dbReference type="PROSITE" id="PS52004">
    <property type="entry name" value="KS3_2"/>
    <property type="match status" value="1"/>
</dbReference>
<organism>
    <name type="scientific">Streptomyces glaucescens</name>
    <dbReference type="NCBI Taxonomy" id="1907"/>
    <lineage>
        <taxon>Bacteria</taxon>
        <taxon>Bacillati</taxon>
        <taxon>Actinomycetota</taxon>
        <taxon>Actinomycetes</taxon>
        <taxon>Kitasatosporales</taxon>
        <taxon>Streptomycetaceae</taxon>
        <taxon>Streptomyces</taxon>
    </lineage>
</organism>